<organism>
    <name type="scientific">Methylococcus capsulatus (strain ATCC 33009 / NCIMB 11132 / Bath)</name>
    <dbReference type="NCBI Taxonomy" id="243233"/>
    <lineage>
        <taxon>Bacteria</taxon>
        <taxon>Pseudomonadati</taxon>
        <taxon>Pseudomonadota</taxon>
        <taxon>Gammaproteobacteria</taxon>
        <taxon>Methylococcales</taxon>
        <taxon>Methylococcaceae</taxon>
        <taxon>Methylococcus</taxon>
    </lineage>
</organism>
<evidence type="ECO:0000255" key="1">
    <source>
        <dbReference type="HAMAP-Rule" id="MF_00059"/>
    </source>
</evidence>
<sequence>MHNSLAELIKPRTVEVVPHGSHSARVVIEPLERGFGHTLGNALRRVLLSAIPGAAVTDVVIDGVLHEYSTIEGVQEDVIDVLLNLKNLAIRLNGPHDVYLNVDKHGPGPVLAGDIEASHDVEVLNPELLIAHINGNGRLRMTLHVQKGRGYQPVANRAIEGDSAIGTLHLDASFSPIKKVSYVVESARVEQRTDLDRLVIELQTNGTVQPEEAVKHAANILNQHLAILVDLKGEDLPLFGEDGPQFDPLLLHPVDDLELTVRSANCLKAENIFYIGDLIQRSEADLLKTPNLGKKSLTEIKDVLATKGLSLGMRLENWPPEGLKKLNQ</sequence>
<proteinExistence type="inferred from homology"/>
<keyword id="KW-0240">DNA-directed RNA polymerase</keyword>
<keyword id="KW-0548">Nucleotidyltransferase</keyword>
<keyword id="KW-1185">Reference proteome</keyword>
<keyword id="KW-0804">Transcription</keyword>
<keyword id="KW-0808">Transferase</keyword>
<dbReference type="EC" id="2.7.7.6" evidence="1"/>
<dbReference type="EMBL" id="AE017282">
    <property type="protein sequence ID" value="AAU91500.1"/>
    <property type="molecule type" value="Genomic_DNA"/>
</dbReference>
<dbReference type="RefSeq" id="WP_010961575.1">
    <property type="nucleotide sequence ID" value="NC_002977.6"/>
</dbReference>
<dbReference type="SMR" id="Q605D7"/>
<dbReference type="STRING" id="243233.MCA2347"/>
<dbReference type="GeneID" id="88224551"/>
<dbReference type="KEGG" id="mca:MCA2347"/>
<dbReference type="eggNOG" id="COG0202">
    <property type="taxonomic scope" value="Bacteria"/>
</dbReference>
<dbReference type="HOGENOM" id="CLU_053084_0_0_6"/>
<dbReference type="Proteomes" id="UP000006821">
    <property type="component" value="Chromosome"/>
</dbReference>
<dbReference type="GO" id="GO:0005737">
    <property type="term" value="C:cytoplasm"/>
    <property type="evidence" value="ECO:0007669"/>
    <property type="project" value="UniProtKB-ARBA"/>
</dbReference>
<dbReference type="GO" id="GO:0000428">
    <property type="term" value="C:DNA-directed RNA polymerase complex"/>
    <property type="evidence" value="ECO:0007669"/>
    <property type="project" value="UniProtKB-KW"/>
</dbReference>
<dbReference type="GO" id="GO:0003677">
    <property type="term" value="F:DNA binding"/>
    <property type="evidence" value="ECO:0007669"/>
    <property type="project" value="UniProtKB-UniRule"/>
</dbReference>
<dbReference type="GO" id="GO:0003899">
    <property type="term" value="F:DNA-directed RNA polymerase activity"/>
    <property type="evidence" value="ECO:0007669"/>
    <property type="project" value="UniProtKB-UniRule"/>
</dbReference>
<dbReference type="GO" id="GO:0046983">
    <property type="term" value="F:protein dimerization activity"/>
    <property type="evidence" value="ECO:0007669"/>
    <property type="project" value="InterPro"/>
</dbReference>
<dbReference type="GO" id="GO:0006351">
    <property type="term" value="P:DNA-templated transcription"/>
    <property type="evidence" value="ECO:0007669"/>
    <property type="project" value="UniProtKB-UniRule"/>
</dbReference>
<dbReference type="CDD" id="cd06928">
    <property type="entry name" value="RNAP_alpha_NTD"/>
    <property type="match status" value="1"/>
</dbReference>
<dbReference type="FunFam" id="1.10.150.20:FF:000001">
    <property type="entry name" value="DNA-directed RNA polymerase subunit alpha"/>
    <property type="match status" value="1"/>
</dbReference>
<dbReference type="FunFam" id="2.170.120.12:FF:000001">
    <property type="entry name" value="DNA-directed RNA polymerase subunit alpha"/>
    <property type="match status" value="1"/>
</dbReference>
<dbReference type="Gene3D" id="1.10.150.20">
    <property type="entry name" value="5' to 3' exonuclease, C-terminal subdomain"/>
    <property type="match status" value="1"/>
</dbReference>
<dbReference type="Gene3D" id="2.170.120.12">
    <property type="entry name" value="DNA-directed RNA polymerase, insert domain"/>
    <property type="match status" value="1"/>
</dbReference>
<dbReference type="Gene3D" id="3.30.1360.10">
    <property type="entry name" value="RNA polymerase, RBP11-like subunit"/>
    <property type="match status" value="1"/>
</dbReference>
<dbReference type="HAMAP" id="MF_00059">
    <property type="entry name" value="RNApol_bact_RpoA"/>
    <property type="match status" value="1"/>
</dbReference>
<dbReference type="InterPro" id="IPR011262">
    <property type="entry name" value="DNA-dir_RNA_pol_insert"/>
</dbReference>
<dbReference type="InterPro" id="IPR011263">
    <property type="entry name" value="DNA-dir_RNA_pol_RpoA/D/Rpb3"/>
</dbReference>
<dbReference type="InterPro" id="IPR011773">
    <property type="entry name" value="DNA-dir_RpoA"/>
</dbReference>
<dbReference type="InterPro" id="IPR036603">
    <property type="entry name" value="RBP11-like"/>
</dbReference>
<dbReference type="InterPro" id="IPR011260">
    <property type="entry name" value="RNAP_asu_C"/>
</dbReference>
<dbReference type="InterPro" id="IPR036643">
    <property type="entry name" value="RNApol_insert_sf"/>
</dbReference>
<dbReference type="NCBIfam" id="NF003513">
    <property type="entry name" value="PRK05182.1-2"/>
    <property type="match status" value="1"/>
</dbReference>
<dbReference type="NCBIfam" id="NF003519">
    <property type="entry name" value="PRK05182.2-5"/>
    <property type="match status" value="1"/>
</dbReference>
<dbReference type="NCBIfam" id="TIGR02027">
    <property type="entry name" value="rpoA"/>
    <property type="match status" value="1"/>
</dbReference>
<dbReference type="Pfam" id="PF01000">
    <property type="entry name" value="RNA_pol_A_bac"/>
    <property type="match status" value="1"/>
</dbReference>
<dbReference type="Pfam" id="PF03118">
    <property type="entry name" value="RNA_pol_A_CTD"/>
    <property type="match status" value="1"/>
</dbReference>
<dbReference type="Pfam" id="PF01193">
    <property type="entry name" value="RNA_pol_L"/>
    <property type="match status" value="1"/>
</dbReference>
<dbReference type="SMART" id="SM00662">
    <property type="entry name" value="RPOLD"/>
    <property type="match status" value="1"/>
</dbReference>
<dbReference type="SUPFAM" id="SSF47789">
    <property type="entry name" value="C-terminal domain of RNA polymerase alpha subunit"/>
    <property type="match status" value="1"/>
</dbReference>
<dbReference type="SUPFAM" id="SSF56553">
    <property type="entry name" value="Insert subdomain of RNA polymerase alpha subunit"/>
    <property type="match status" value="1"/>
</dbReference>
<dbReference type="SUPFAM" id="SSF55257">
    <property type="entry name" value="RBP11-like subunits of RNA polymerase"/>
    <property type="match status" value="1"/>
</dbReference>
<feature type="chain" id="PRO_0000175333" description="DNA-directed RNA polymerase subunit alpha">
    <location>
        <begin position="1"/>
        <end position="328"/>
    </location>
</feature>
<feature type="region of interest" description="Alpha N-terminal domain (alpha-NTD)" evidence="1">
    <location>
        <begin position="1"/>
        <end position="232"/>
    </location>
</feature>
<feature type="region of interest" description="Alpha C-terminal domain (alpha-CTD)" evidence="1">
    <location>
        <begin position="246"/>
        <end position="328"/>
    </location>
</feature>
<protein>
    <recommendedName>
        <fullName evidence="1">DNA-directed RNA polymerase subunit alpha</fullName>
        <shortName evidence="1">RNAP subunit alpha</shortName>
        <ecNumber evidence="1">2.7.7.6</ecNumber>
    </recommendedName>
    <alternativeName>
        <fullName evidence="1">RNA polymerase subunit alpha</fullName>
    </alternativeName>
    <alternativeName>
        <fullName evidence="1">Transcriptase subunit alpha</fullName>
    </alternativeName>
</protein>
<accession>Q605D7</accession>
<comment type="function">
    <text evidence="1">DNA-dependent RNA polymerase catalyzes the transcription of DNA into RNA using the four ribonucleoside triphosphates as substrates.</text>
</comment>
<comment type="catalytic activity">
    <reaction evidence="1">
        <text>RNA(n) + a ribonucleoside 5'-triphosphate = RNA(n+1) + diphosphate</text>
        <dbReference type="Rhea" id="RHEA:21248"/>
        <dbReference type="Rhea" id="RHEA-COMP:14527"/>
        <dbReference type="Rhea" id="RHEA-COMP:17342"/>
        <dbReference type="ChEBI" id="CHEBI:33019"/>
        <dbReference type="ChEBI" id="CHEBI:61557"/>
        <dbReference type="ChEBI" id="CHEBI:140395"/>
        <dbReference type="EC" id="2.7.7.6"/>
    </reaction>
</comment>
<comment type="subunit">
    <text evidence="1">Homodimer. The RNAP catalytic core consists of 2 alpha, 1 beta, 1 beta' and 1 omega subunit. When a sigma factor is associated with the core the holoenzyme is formed, which can initiate transcription.</text>
</comment>
<comment type="domain">
    <text evidence="1">The N-terminal domain is essential for RNAP assembly and basal transcription, whereas the C-terminal domain is involved in interaction with transcriptional regulators and with upstream promoter elements.</text>
</comment>
<comment type="similarity">
    <text evidence="1">Belongs to the RNA polymerase alpha chain family.</text>
</comment>
<name>RPOA_METCA</name>
<reference key="1">
    <citation type="journal article" date="2004" name="PLoS Biol.">
        <title>Genomic insights into methanotrophy: the complete genome sequence of Methylococcus capsulatus (Bath).</title>
        <authorList>
            <person name="Ward N.L."/>
            <person name="Larsen O."/>
            <person name="Sakwa J."/>
            <person name="Bruseth L."/>
            <person name="Khouri H.M."/>
            <person name="Durkin A.S."/>
            <person name="Dimitrov G."/>
            <person name="Jiang L."/>
            <person name="Scanlan D."/>
            <person name="Kang K.H."/>
            <person name="Lewis M.R."/>
            <person name="Nelson K.E."/>
            <person name="Methe B.A."/>
            <person name="Wu M."/>
            <person name="Heidelberg J.F."/>
            <person name="Paulsen I.T."/>
            <person name="Fouts D.E."/>
            <person name="Ravel J."/>
            <person name="Tettelin H."/>
            <person name="Ren Q."/>
            <person name="Read T.D."/>
            <person name="DeBoy R.T."/>
            <person name="Seshadri R."/>
            <person name="Salzberg S.L."/>
            <person name="Jensen H.B."/>
            <person name="Birkeland N.K."/>
            <person name="Nelson W.C."/>
            <person name="Dodson R.J."/>
            <person name="Grindhaug S.H."/>
            <person name="Holt I.E."/>
            <person name="Eidhammer I."/>
            <person name="Jonasen I."/>
            <person name="Vanaken S."/>
            <person name="Utterback T.R."/>
            <person name="Feldblyum T.V."/>
            <person name="Fraser C.M."/>
            <person name="Lillehaug J.R."/>
            <person name="Eisen J.A."/>
        </authorList>
    </citation>
    <scope>NUCLEOTIDE SEQUENCE [LARGE SCALE GENOMIC DNA]</scope>
    <source>
        <strain>ATCC 33009 / NCIMB 11132 / Bath</strain>
    </source>
</reference>
<gene>
    <name evidence="1" type="primary">rpoA</name>
    <name type="ordered locus">MCA2347</name>
</gene>